<comment type="similarity">
    <text evidence="1">Belongs to the UPF0340 family.</text>
</comment>
<feature type="chain" id="PRO_0000213009" description="UPF0340 protein OB2986">
    <location>
        <begin position="1"/>
        <end position="181"/>
    </location>
</feature>
<protein>
    <recommendedName>
        <fullName evidence="1">UPF0340 protein OB2986</fullName>
    </recommendedName>
</protein>
<reference key="1">
    <citation type="journal article" date="2002" name="Nucleic Acids Res.">
        <title>Genome sequence of Oceanobacillus iheyensis isolated from the Iheya Ridge and its unexpected adaptive capabilities to extreme environments.</title>
        <authorList>
            <person name="Takami H."/>
            <person name="Takaki Y."/>
            <person name="Uchiyama I."/>
        </authorList>
    </citation>
    <scope>NUCLEOTIDE SEQUENCE [LARGE SCALE GENOMIC DNA]</scope>
    <source>
        <strain>DSM 14371 / CIP 107618 / JCM 11309 / KCTC 3954 / HTE831</strain>
    </source>
</reference>
<accession>Q8EM72</accession>
<name>Y2986_OCEIH</name>
<keyword id="KW-1185">Reference proteome</keyword>
<dbReference type="EMBL" id="BA000028">
    <property type="protein sequence ID" value="BAC14942.1"/>
    <property type="molecule type" value="Genomic_DNA"/>
</dbReference>
<dbReference type="RefSeq" id="WP_011067383.1">
    <property type="nucleotide sequence ID" value="NC_004193.1"/>
</dbReference>
<dbReference type="SMR" id="Q8EM72"/>
<dbReference type="STRING" id="221109.gene:10735238"/>
<dbReference type="KEGG" id="oih:OB2986"/>
<dbReference type="eggNOG" id="COG4475">
    <property type="taxonomic scope" value="Bacteria"/>
</dbReference>
<dbReference type="HOGENOM" id="CLU_106658_0_0_9"/>
<dbReference type="OrthoDB" id="9803187at2"/>
<dbReference type="PhylomeDB" id="Q8EM72"/>
<dbReference type="Proteomes" id="UP000000822">
    <property type="component" value="Chromosome"/>
</dbReference>
<dbReference type="Gene3D" id="3.40.50.10360">
    <property type="entry name" value="Hypothetical protein TT1679"/>
    <property type="match status" value="1"/>
</dbReference>
<dbReference type="HAMAP" id="MF_00800">
    <property type="entry name" value="UPF0340"/>
    <property type="match status" value="1"/>
</dbReference>
<dbReference type="InterPro" id="IPR028345">
    <property type="entry name" value="Antibiotic_NAT-like"/>
</dbReference>
<dbReference type="InterPro" id="IPR006340">
    <property type="entry name" value="DUF436"/>
</dbReference>
<dbReference type="NCBIfam" id="TIGR01440">
    <property type="entry name" value="TIGR01440 family protein"/>
    <property type="match status" value="1"/>
</dbReference>
<dbReference type="Pfam" id="PF04260">
    <property type="entry name" value="DUF436"/>
    <property type="match status" value="1"/>
</dbReference>
<dbReference type="PIRSF" id="PIRSF007510">
    <property type="entry name" value="UCP007510"/>
    <property type="match status" value="1"/>
</dbReference>
<dbReference type="SUPFAM" id="SSF110710">
    <property type="entry name" value="TTHA0583/YokD-like"/>
    <property type="match status" value="1"/>
</dbReference>
<proteinExistence type="inferred from homology"/>
<organism>
    <name type="scientific">Oceanobacillus iheyensis (strain DSM 14371 / CIP 107618 / JCM 11309 / KCTC 3954 / HTE831)</name>
    <dbReference type="NCBI Taxonomy" id="221109"/>
    <lineage>
        <taxon>Bacteria</taxon>
        <taxon>Bacillati</taxon>
        <taxon>Bacillota</taxon>
        <taxon>Bacilli</taxon>
        <taxon>Bacillales</taxon>
        <taxon>Bacillaceae</taxon>
        <taxon>Oceanobacillus</taxon>
    </lineage>
</organism>
<sequence length="181" mass="19902">MTNDRLAQDLKCIVKEWTDARILRENDIFVVGCSTSEVAGQPIGTAGSEEIASTIYQQLQSLQNATGINLAFQCCEHLNRAIVVERTIATTYSLPEVTAIPVREAGGAMAAYAYQHMIDPVVVEKITAEAGMDIGETMIGMHLKHVAVPLKFKQRFINYARVRAARTRPKLVGGSRAYYGK</sequence>
<evidence type="ECO:0000255" key="1">
    <source>
        <dbReference type="HAMAP-Rule" id="MF_00800"/>
    </source>
</evidence>
<gene>
    <name type="ordered locus">OB2986</name>
</gene>